<reference key="1">
    <citation type="submission" date="2006-10" db="EMBL/GenBank/DDBJ databases">
        <title>Complete sequence of chromosome of Pelobacter propionicus DSM 2379.</title>
        <authorList>
            <consortium name="US DOE Joint Genome Institute"/>
            <person name="Copeland A."/>
            <person name="Lucas S."/>
            <person name="Lapidus A."/>
            <person name="Barry K."/>
            <person name="Detter J.C."/>
            <person name="Glavina del Rio T."/>
            <person name="Hammon N."/>
            <person name="Israni S."/>
            <person name="Dalin E."/>
            <person name="Tice H."/>
            <person name="Pitluck S."/>
            <person name="Saunders E."/>
            <person name="Brettin T."/>
            <person name="Bruce D."/>
            <person name="Han C."/>
            <person name="Tapia R."/>
            <person name="Schmutz J."/>
            <person name="Larimer F."/>
            <person name="Land M."/>
            <person name="Hauser L."/>
            <person name="Kyrpides N."/>
            <person name="Kim E."/>
            <person name="Lovley D."/>
            <person name="Richardson P."/>
        </authorList>
    </citation>
    <scope>NUCLEOTIDE SEQUENCE [LARGE SCALE GENOMIC DNA]</scope>
    <source>
        <strain>DSM 2379 / NBRC 103807 / OttBd1</strain>
    </source>
</reference>
<protein>
    <recommendedName>
        <fullName evidence="1">Large ribosomal subunit protein bL19</fullName>
    </recommendedName>
    <alternativeName>
        <fullName evidence="2">50S ribosomal protein L19</fullName>
    </alternativeName>
</protein>
<name>RL19_PELPD</name>
<feature type="chain" id="PRO_1000049716" description="Large ribosomal subunit protein bL19">
    <location>
        <begin position="1"/>
        <end position="119"/>
    </location>
</feature>
<organism>
    <name type="scientific">Pelobacter propionicus (strain DSM 2379 / NBRC 103807 / OttBd1)</name>
    <dbReference type="NCBI Taxonomy" id="338966"/>
    <lineage>
        <taxon>Bacteria</taxon>
        <taxon>Pseudomonadati</taxon>
        <taxon>Thermodesulfobacteriota</taxon>
        <taxon>Desulfuromonadia</taxon>
        <taxon>Desulfuromonadales</taxon>
        <taxon>Desulfuromonadaceae</taxon>
        <taxon>Pelobacter</taxon>
    </lineage>
</organism>
<sequence>MNTIDFLEFEQMKKNVAPFKVGDTVKVQVKIVEGDKQRIQAYQGVVISRQNGGIRESFTVRKISNGIGVERIFPLHSPILETVEIVTRGHVRRAKLYYLRKLRGKAARIREKKYVPIAK</sequence>
<proteinExistence type="inferred from homology"/>
<keyword id="KW-1185">Reference proteome</keyword>
<keyword id="KW-0687">Ribonucleoprotein</keyword>
<keyword id="KW-0689">Ribosomal protein</keyword>
<gene>
    <name evidence="1" type="primary">rplS</name>
    <name type="ordered locus">Ppro_1093</name>
</gene>
<evidence type="ECO:0000255" key="1">
    <source>
        <dbReference type="HAMAP-Rule" id="MF_00402"/>
    </source>
</evidence>
<evidence type="ECO:0000305" key="2"/>
<dbReference type="EMBL" id="CP000482">
    <property type="protein sequence ID" value="ABK98718.1"/>
    <property type="molecule type" value="Genomic_DNA"/>
</dbReference>
<dbReference type="RefSeq" id="WP_011735022.1">
    <property type="nucleotide sequence ID" value="NC_008609.1"/>
</dbReference>
<dbReference type="SMR" id="A1AMZ8"/>
<dbReference type="STRING" id="338966.Ppro_1093"/>
<dbReference type="KEGG" id="ppd:Ppro_1093"/>
<dbReference type="eggNOG" id="COG0335">
    <property type="taxonomic scope" value="Bacteria"/>
</dbReference>
<dbReference type="HOGENOM" id="CLU_103507_2_1_7"/>
<dbReference type="OrthoDB" id="9803541at2"/>
<dbReference type="Proteomes" id="UP000006732">
    <property type="component" value="Chromosome"/>
</dbReference>
<dbReference type="GO" id="GO:0022625">
    <property type="term" value="C:cytosolic large ribosomal subunit"/>
    <property type="evidence" value="ECO:0007669"/>
    <property type="project" value="TreeGrafter"/>
</dbReference>
<dbReference type="GO" id="GO:0003735">
    <property type="term" value="F:structural constituent of ribosome"/>
    <property type="evidence" value="ECO:0007669"/>
    <property type="project" value="InterPro"/>
</dbReference>
<dbReference type="GO" id="GO:0006412">
    <property type="term" value="P:translation"/>
    <property type="evidence" value="ECO:0007669"/>
    <property type="project" value="UniProtKB-UniRule"/>
</dbReference>
<dbReference type="FunFam" id="2.30.30.790:FF:000001">
    <property type="entry name" value="50S ribosomal protein L19"/>
    <property type="match status" value="1"/>
</dbReference>
<dbReference type="Gene3D" id="2.30.30.790">
    <property type="match status" value="1"/>
</dbReference>
<dbReference type="HAMAP" id="MF_00402">
    <property type="entry name" value="Ribosomal_bL19"/>
    <property type="match status" value="1"/>
</dbReference>
<dbReference type="InterPro" id="IPR001857">
    <property type="entry name" value="Ribosomal_bL19"/>
</dbReference>
<dbReference type="InterPro" id="IPR018257">
    <property type="entry name" value="Ribosomal_bL19_CS"/>
</dbReference>
<dbReference type="InterPro" id="IPR038657">
    <property type="entry name" value="Ribosomal_bL19_sf"/>
</dbReference>
<dbReference type="InterPro" id="IPR008991">
    <property type="entry name" value="Translation_prot_SH3-like_sf"/>
</dbReference>
<dbReference type="NCBIfam" id="TIGR01024">
    <property type="entry name" value="rplS_bact"/>
    <property type="match status" value="1"/>
</dbReference>
<dbReference type="PANTHER" id="PTHR15680:SF9">
    <property type="entry name" value="LARGE RIBOSOMAL SUBUNIT PROTEIN BL19M"/>
    <property type="match status" value="1"/>
</dbReference>
<dbReference type="PANTHER" id="PTHR15680">
    <property type="entry name" value="RIBOSOMAL PROTEIN L19"/>
    <property type="match status" value="1"/>
</dbReference>
<dbReference type="Pfam" id="PF01245">
    <property type="entry name" value="Ribosomal_L19"/>
    <property type="match status" value="1"/>
</dbReference>
<dbReference type="PIRSF" id="PIRSF002191">
    <property type="entry name" value="Ribosomal_L19"/>
    <property type="match status" value="1"/>
</dbReference>
<dbReference type="PRINTS" id="PR00061">
    <property type="entry name" value="RIBOSOMALL19"/>
</dbReference>
<dbReference type="SUPFAM" id="SSF50104">
    <property type="entry name" value="Translation proteins SH3-like domain"/>
    <property type="match status" value="1"/>
</dbReference>
<dbReference type="PROSITE" id="PS01015">
    <property type="entry name" value="RIBOSOMAL_L19"/>
    <property type="match status" value="1"/>
</dbReference>
<comment type="function">
    <text evidence="1">This protein is located at the 30S-50S ribosomal subunit interface and may play a role in the structure and function of the aminoacyl-tRNA binding site.</text>
</comment>
<comment type="similarity">
    <text evidence="1">Belongs to the bacterial ribosomal protein bL19 family.</text>
</comment>
<accession>A1AMZ8</accession>